<dbReference type="EMBL" id="AABR07062288">
    <property type="status" value="NOT_ANNOTATED_CDS"/>
    <property type="molecule type" value="Genomic_DNA"/>
</dbReference>
<dbReference type="EMBL" id="CH473964">
    <property type="protein sequence ID" value="EDM01680.1"/>
    <property type="molecule type" value="Genomic_DNA"/>
</dbReference>
<dbReference type="RefSeq" id="NP_001102119.1">
    <property type="nucleotide sequence ID" value="NM_001108649.1"/>
</dbReference>
<dbReference type="RefSeq" id="XP_006237530.1">
    <property type="nucleotide sequence ID" value="XM_006237468.3"/>
</dbReference>
<dbReference type="RefSeq" id="XP_038963831.1">
    <property type="nucleotide sequence ID" value="XM_039107903.2"/>
</dbReference>
<dbReference type="RefSeq" id="XP_063142440.1">
    <property type="nucleotide sequence ID" value="XM_063286370.1"/>
</dbReference>
<dbReference type="SMR" id="D3Z9M3"/>
<dbReference type="STRING" id="10116.ENSRNOP00000058891"/>
<dbReference type="PaxDb" id="10116-ENSRNOP00000058891"/>
<dbReference type="Ensembl" id="ENSRNOT00000067909.2">
    <property type="protein sequence ID" value="ENSRNOP00000058891.1"/>
    <property type="gene ID" value="ENSRNOG00000042018.2"/>
</dbReference>
<dbReference type="GeneID" id="362451"/>
<dbReference type="KEGG" id="rno:362451"/>
<dbReference type="UCSC" id="RGD:1306750">
    <property type="organism name" value="rat"/>
</dbReference>
<dbReference type="AGR" id="RGD:1306750"/>
<dbReference type="CTD" id="362451"/>
<dbReference type="RGD" id="1306750">
    <property type="gene designation" value="RGD1306750"/>
</dbReference>
<dbReference type="HOGENOM" id="CLU_174146_0_0_1"/>
<dbReference type="InParanoid" id="D3Z9M3"/>
<dbReference type="OMA" id="SSHNNRE"/>
<dbReference type="PRO" id="PR:D3Z9M3"/>
<dbReference type="Proteomes" id="UP000002494">
    <property type="component" value="Chromosome 4"/>
</dbReference>
<dbReference type="Proteomes" id="UP000234681">
    <property type="component" value="Chromosome 4"/>
</dbReference>
<dbReference type="Bgee" id="ENSRNOG00000042018">
    <property type="expression patterns" value="Expressed in heart and 1 other cell type or tissue"/>
</dbReference>
<dbReference type="GO" id="GO:0005576">
    <property type="term" value="C:extracellular region"/>
    <property type="evidence" value="ECO:0007669"/>
    <property type="project" value="UniProtKB-SubCell"/>
</dbReference>
<sequence length="109" mass="12547">MLVILLMVVVLALSSAQDPNRDFVVSSQDVRERQPSSQQGTVGGQSQESQLRDQQQQQSLQQSQEQQPQPQLQQTKQPQRPVKGQPLPQQQQQQNQRPRPRYQQPRRAV</sequence>
<reference key="1">
    <citation type="journal article" date="2004" name="Nature">
        <title>Genome sequence of the Brown Norway rat yields insights into mammalian evolution.</title>
        <authorList>
            <person name="Gibbs R.A."/>
            <person name="Weinstock G.M."/>
            <person name="Metzker M.L."/>
            <person name="Muzny D.M."/>
            <person name="Sodergren E.J."/>
            <person name="Scherer S."/>
            <person name="Scott G."/>
            <person name="Steffen D."/>
            <person name="Worley K.C."/>
            <person name="Burch P.E."/>
            <person name="Okwuonu G."/>
            <person name="Hines S."/>
            <person name="Lewis L."/>
            <person name="Deramo C."/>
            <person name="Delgado O."/>
            <person name="Dugan-Rocha S."/>
            <person name="Miner G."/>
            <person name="Morgan M."/>
            <person name="Hawes A."/>
            <person name="Gill R."/>
            <person name="Holt R.A."/>
            <person name="Adams M.D."/>
            <person name="Amanatides P.G."/>
            <person name="Baden-Tillson H."/>
            <person name="Barnstead M."/>
            <person name="Chin S."/>
            <person name="Evans C.A."/>
            <person name="Ferriera S."/>
            <person name="Fosler C."/>
            <person name="Glodek A."/>
            <person name="Gu Z."/>
            <person name="Jennings D."/>
            <person name="Kraft C.L."/>
            <person name="Nguyen T."/>
            <person name="Pfannkoch C.M."/>
            <person name="Sitter C."/>
            <person name="Sutton G.G."/>
            <person name="Venter J.C."/>
            <person name="Woodage T."/>
            <person name="Smith D."/>
            <person name="Lee H.-M."/>
            <person name="Gustafson E."/>
            <person name="Cahill P."/>
            <person name="Kana A."/>
            <person name="Doucette-Stamm L."/>
            <person name="Weinstock K."/>
            <person name="Fechtel K."/>
            <person name="Weiss R.B."/>
            <person name="Dunn D.M."/>
            <person name="Green E.D."/>
            <person name="Blakesley R.W."/>
            <person name="Bouffard G.G."/>
            <person name="De Jong P.J."/>
            <person name="Osoegawa K."/>
            <person name="Zhu B."/>
            <person name="Marra M."/>
            <person name="Schein J."/>
            <person name="Bosdet I."/>
            <person name="Fjell C."/>
            <person name="Jones S."/>
            <person name="Krzywinski M."/>
            <person name="Mathewson C."/>
            <person name="Siddiqui A."/>
            <person name="Wye N."/>
            <person name="McPherson J."/>
            <person name="Zhao S."/>
            <person name="Fraser C.M."/>
            <person name="Shetty J."/>
            <person name="Shatsman S."/>
            <person name="Geer K."/>
            <person name="Chen Y."/>
            <person name="Abramzon S."/>
            <person name="Nierman W.C."/>
            <person name="Havlak P.H."/>
            <person name="Chen R."/>
            <person name="Durbin K.J."/>
            <person name="Egan A."/>
            <person name="Ren Y."/>
            <person name="Song X.-Z."/>
            <person name="Li B."/>
            <person name="Liu Y."/>
            <person name="Qin X."/>
            <person name="Cawley S."/>
            <person name="Cooney A.J."/>
            <person name="D'Souza L.M."/>
            <person name="Martin K."/>
            <person name="Wu J.Q."/>
            <person name="Gonzalez-Garay M.L."/>
            <person name="Jackson A.R."/>
            <person name="Kalafus K.J."/>
            <person name="McLeod M.P."/>
            <person name="Milosavljevic A."/>
            <person name="Virk D."/>
            <person name="Volkov A."/>
            <person name="Wheeler D.A."/>
            <person name="Zhang Z."/>
            <person name="Bailey J.A."/>
            <person name="Eichler E.E."/>
            <person name="Tuzun E."/>
            <person name="Birney E."/>
            <person name="Mongin E."/>
            <person name="Ureta-Vidal A."/>
            <person name="Woodwark C."/>
            <person name="Zdobnov E."/>
            <person name="Bork P."/>
            <person name="Suyama M."/>
            <person name="Torrents D."/>
            <person name="Alexandersson M."/>
            <person name="Trask B.J."/>
            <person name="Young J.M."/>
            <person name="Huang H."/>
            <person name="Wang H."/>
            <person name="Xing H."/>
            <person name="Daniels S."/>
            <person name="Gietzen D."/>
            <person name="Schmidt J."/>
            <person name="Stevens K."/>
            <person name="Vitt U."/>
            <person name="Wingrove J."/>
            <person name="Camara F."/>
            <person name="Mar Alba M."/>
            <person name="Abril J.F."/>
            <person name="Guigo R."/>
            <person name="Smit A."/>
            <person name="Dubchak I."/>
            <person name="Rubin E.M."/>
            <person name="Couronne O."/>
            <person name="Poliakov A."/>
            <person name="Huebner N."/>
            <person name="Ganten D."/>
            <person name="Goesele C."/>
            <person name="Hummel O."/>
            <person name="Kreitler T."/>
            <person name="Lee Y.-A."/>
            <person name="Monti J."/>
            <person name="Schulz H."/>
            <person name="Zimdahl H."/>
            <person name="Himmelbauer H."/>
            <person name="Lehrach H."/>
            <person name="Jacob H.J."/>
            <person name="Bromberg S."/>
            <person name="Gullings-Handley J."/>
            <person name="Jensen-Seaman M.I."/>
            <person name="Kwitek A.E."/>
            <person name="Lazar J."/>
            <person name="Pasko D."/>
            <person name="Tonellato P.J."/>
            <person name="Twigger S."/>
            <person name="Ponting C.P."/>
            <person name="Duarte J.M."/>
            <person name="Rice S."/>
            <person name="Goodstadt L."/>
            <person name="Beatson S.A."/>
            <person name="Emes R.D."/>
            <person name="Winter E.E."/>
            <person name="Webber C."/>
            <person name="Brandt P."/>
            <person name="Nyakatura G."/>
            <person name="Adetobi M."/>
            <person name="Chiaromonte F."/>
            <person name="Elnitski L."/>
            <person name="Eswara P."/>
            <person name="Hardison R.C."/>
            <person name="Hou M."/>
            <person name="Kolbe D."/>
            <person name="Makova K."/>
            <person name="Miller W."/>
            <person name="Nekrutenko A."/>
            <person name="Riemer C."/>
            <person name="Schwartz S."/>
            <person name="Taylor J."/>
            <person name="Yang S."/>
            <person name="Zhang Y."/>
            <person name="Lindpaintner K."/>
            <person name="Andrews T.D."/>
            <person name="Caccamo M."/>
            <person name="Clamp M."/>
            <person name="Clarke L."/>
            <person name="Curwen V."/>
            <person name="Durbin R.M."/>
            <person name="Eyras E."/>
            <person name="Searle S.M."/>
            <person name="Cooper G.M."/>
            <person name="Batzoglou S."/>
            <person name="Brudno M."/>
            <person name="Sidow A."/>
            <person name="Stone E.A."/>
            <person name="Payseur B.A."/>
            <person name="Bourque G."/>
            <person name="Lopez-Otin C."/>
            <person name="Puente X.S."/>
            <person name="Chakrabarti K."/>
            <person name="Chatterji S."/>
            <person name="Dewey C."/>
            <person name="Pachter L."/>
            <person name="Bray N."/>
            <person name="Yap V.B."/>
            <person name="Caspi A."/>
            <person name="Tesler G."/>
            <person name="Pevzner P.A."/>
            <person name="Haussler D."/>
            <person name="Roskin K.M."/>
            <person name="Baertsch R."/>
            <person name="Clawson H."/>
            <person name="Furey T.S."/>
            <person name="Hinrichs A.S."/>
            <person name="Karolchik D."/>
            <person name="Kent W.J."/>
            <person name="Rosenbloom K.R."/>
            <person name="Trumbower H."/>
            <person name="Weirauch M."/>
            <person name="Cooper D.N."/>
            <person name="Stenson P.D."/>
            <person name="Ma B."/>
            <person name="Brent M."/>
            <person name="Arumugam M."/>
            <person name="Shteynberg D."/>
            <person name="Copley R.R."/>
            <person name="Taylor M.S."/>
            <person name="Riethman H."/>
            <person name="Mudunuri U."/>
            <person name="Peterson J."/>
            <person name="Guyer M."/>
            <person name="Felsenfeld A."/>
            <person name="Old S."/>
            <person name="Mockrin S."/>
            <person name="Collins F.S."/>
        </authorList>
    </citation>
    <scope>NUCLEOTIDE SEQUENCE [LARGE SCALE GENOMIC DNA]</scope>
    <source>
        <strain>Brown Norway</strain>
    </source>
</reference>
<reference key="2">
    <citation type="submission" date="2005-09" db="EMBL/GenBank/DDBJ databases">
        <authorList>
            <person name="Mural R.J."/>
            <person name="Adams M.D."/>
            <person name="Myers E.W."/>
            <person name="Smith H.O."/>
            <person name="Venter J.C."/>
        </authorList>
    </citation>
    <scope>NUCLEOTIDE SEQUENCE [LARGE SCALE GENOMIC DNA]</scope>
    <source>
        <strain>Brown Norway</strain>
    </source>
</reference>
<reference key="3">
    <citation type="journal article" date="2013" name="J. Sep. Sci.">
        <title>Top-down HPLC-ESI-MS characterization of rat gliadoralin A, a new member of the family of rat submandibular gland glutamine-rich proteins and potential substrate of transglutaminase.</title>
        <authorList>
            <person name="Cabras T."/>
            <person name="Iavarone F."/>
            <person name="Pirolli D."/>
            <person name="De Rosa M.C."/>
            <person name="Vitali A."/>
            <person name="Faa G."/>
            <person name="Cordaro M."/>
            <person name="Messana I."/>
            <person name="Ekstroem J."/>
            <person name="Castagnola M."/>
        </authorList>
    </citation>
    <scope>FUNCTION</scope>
    <scope>TISSUE SPECIFICITY</scope>
    <scope>SUBCELLULAR LOCATION</scope>
    <scope>IDENTIFICATION BY MASS SPECTROMETRY</scope>
    <scope>PYROGLUTAMATE FORMATION AT GLN-17</scope>
    <scope>PROTEOLYTIC PROCESSING</scope>
</reference>
<keyword id="KW-0873">Pyrrolidone carboxylic acid</keyword>
<keyword id="KW-1185">Reference proteome</keyword>
<keyword id="KW-0964">Secreted</keyword>
<keyword id="KW-0732">Signal</keyword>
<accession>D3Z9M3</accession>
<organism>
    <name type="scientific">Rattus norvegicus</name>
    <name type="common">Rat</name>
    <dbReference type="NCBI Taxonomy" id="10116"/>
    <lineage>
        <taxon>Eukaryota</taxon>
        <taxon>Metazoa</taxon>
        <taxon>Chordata</taxon>
        <taxon>Craniata</taxon>
        <taxon>Vertebrata</taxon>
        <taxon>Euteleostomi</taxon>
        <taxon>Mammalia</taxon>
        <taxon>Eutheria</taxon>
        <taxon>Euarchontoglires</taxon>
        <taxon>Glires</taxon>
        <taxon>Rodentia</taxon>
        <taxon>Myomorpha</taxon>
        <taxon>Muroidea</taxon>
        <taxon>Muridae</taxon>
        <taxon>Murinae</taxon>
        <taxon>Rattus</taxon>
    </lineage>
</organism>
<feature type="signal peptide" evidence="2">
    <location>
        <begin position="1"/>
        <end position="16"/>
    </location>
</feature>
<feature type="chain" id="PRO_5008161006" description="Gliadoralin-A" evidence="2">
    <location>
        <begin position="17"/>
        <end position="106"/>
    </location>
</feature>
<feature type="propeptide" id="PRO_0000439193" evidence="2">
    <location>
        <begin position="107"/>
        <end position="109"/>
    </location>
</feature>
<feature type="region of interest" description="Disordered" evidence="1">
    <location>
        <begin position="17"/>
        <end position="109"/>
    </location>
</feature>
<feature type="compositionally biased region" description="Low complexity" evidence="1">
    <location>
        <begin position="35"/>
        <end position="109"/>
    </location>
</feature>
<feature type="modified residue" description="Pyrrolidone carboxylic acid" evidence="2">
    <location>
        <position position="17"/>
    </location>
</feature>
<comment type="function">
    <text evidence="4">May play a role in the formation of the protective mucosal protein pellicle involved in the reinforcement and protection of oral mucosal epithelial surface.</text>
</comment>
<comment type="subcellular location">
    <subcellularLocation>
        <location evidence="2">Secreted</location>
    </subcellularLocation>
</comment>
<comment type="tissue specificity">
    <text evidence="2">Found in saliva (at protein level). Secreted from the submandibular gland.</text>
</comment>
<comment type="induction">
    <text evidence="2">By isoprenaline. Prolongend stimulation does not change the percentages of secreted forms (with gliadoralin A 1-90 as predominant form).</text>
</comment>
<comment type="PTM">
    <text evidence="4">Predominantly proteolytically processed at its C-terminus before secretion to produce the major form gliadoralin A 1-90. Further proteloytically processed after secretion to produce minor forms. Potential substrate of transglutaminase.</text>
</comment>
<name>GLIAD_RAT</name>
<proteinExistence type="evidence at protein level"/>
<evidence type="ECO:0000256" key="1">
    <source>
        <dbReference type="SAM" id="MobiDB-lite"/>
    </source>
</evidence>
<evidence type="ECO:0000269" key="2">
    <source>
    </source>
</evidence>
<evidence type="ECO:0000303" key="3">
    <source>
    </source>
</evidence>
<evidence type="ECO:0000305" key="4">
    <source>
    </source>
</evidence>
<protein>
    <recommendedName>
        <fullName evidence="3">Gliadoralin-A</fullName>
    </recommendedName>
</protein>